<comment type="subcellular location">
    <subcellularLocation>
        <location evidence="1">Membrane</location>
        <topology evidence="1">Single-pass membrane protein</topology>
    </subcellularLocation>
</comment>
<comment type="miscellaneous">
    <text evidence="2">Partially overlaps HXK1.</text>
</comment>
<comment type="caution">
    <text evidence="3">Product of a dubious gene prediction unlikely to encode a functional protein. Because of that it is not part of the S.cerevisiae S288c complete/reference proteome set.</text>
</comment>
<feature type="chain" id="PRO_0000431013" description="Putative uncharacterized protein YFR052C-A">
    <location>
        <begin position="1"/>
        <end position="101"/>
    </location>
</feature>
<feature type="transmembrane region" description="Helical" evidence="1">
    <location>
        <begin position="58"/>
        <end position="80"/>
    </location>
</feature>
<gene>
    <name evidence="4" type="ordered locus">YFR052C-A</name>
</gene>
<accession>A0A023PZH4</accession>
<evidence type="ECO:0000255" key="1"/>
<evidence type="ECO:0000305" key="2"/>
<evidence type="ECO:0000305" key="3">
    <source>
    </source>
</evidence>
<evidence type="ECO:0000312" key="4">
    <source>
        <dbReference type="SGD" id="S000028768"/>
    </source>
</evidence>
<proteinExistence type="uncertain"/>
<keyword id="KW-0472">Membrane</keyword>
<keyword id="KW-0812">Transmembrane</keyword>
<keyword id="KW-1133">Transmembrane helix</keyword>
<protein>
    <recommendedName>
        <fullName evidence="2">Putative uncharacterized protein YFR052C-A</fullName>
    </recommendedName>
</protein>
<reference key="1">
    <citation type="journal article" date="1995" name="Nat. Genet.">
        <title>Analysis of the nucleotide sequence of chromosome VI from Saccharomyces cerevisiae.</title>
        <authorList>
            <person name="Murakami Y."/>
            <person name="Naitou M."/>
            <person name="Hagiwara H."/>
            <person name="Shibata T."/>
            <person name="Ozawa M."/>
            <person name="Sasanuma S."/>
            <person name="Sasanuma M."/>
            <person name="Tsuchiya Y."/>
            <person name="Soeda E."/>
            <person name="Yokoyama K."/>
            <person name="Yamazaki M."/>
            <person name="Tashiro H."/>
            <person name="Eki T."/>
        </authorList>
    </citation>
    <scope>NUCLEOTIDE SEQUENCE [LARGE SCALE GENOMIC DNA]</scope>
    <source>
        <strain>ATCC 204508 / S288c</strain>
    </source>
</reference>
<reference key="2">
    <citation type="journal article" date="2014" name="G3 (Bethesda)">
        <title>The reference genome sequence of Saccharomyces cerevisiae: Then and now.</title>
        <authorList>
            <person name="Engel S.R."/>
            <person name="Dietrich F.S."/>
            <person name="Fisk D.G."/>
            <person name="Binkley G."/>
            <person name="Balakrishnan R."/>
            <person name="Costanzo M.C."/>
            <person name="Dwight S.S."/>
            <person name="Hitz B.C."/>
            <person name="Karra K."/>
            <person name="Nash R.S."/>
            <person name="Weng S."/>
            <person name="Wong E.D."/>
            <person name="Lloyd P."/>
            <person name="Skrzypek M.S."/>
            <person name="Miyasato S.R."/>
            <person name="Simison M."/>
            <person name="Cherry J.M."/>
        </authorList>
    </citation>
    <scope>GENOME REANNOTATION</scope>
    <source>
        <strain>ATCC 204508 / S288c</strain>
    </source>
</reference>
<organism>
    <name type="scientific">Saccharomyces cerevisiae (strain ATCC 204508 / S288c)</name>
    <name type="common">Baker's yeast</name>
    <dbReference type="NCBI Taxonomy" id="559292"/>
    <lineage>
        <taxon>Eukaryota</taxon>
        <taxon>Fungi</taxon>
        <taxon>Dikarya</taxon>
        <taxon>Ascomycota</taxon>
        <taxon>Saccharomycotina</taxon>
        <taxon>Saccharomycetes</taxon>
        <taxon>Saccharomycetales</taxon>
        <taxon>Saccharomycetaceae</taxon>
        <taxon>Saccharomyces</taxon>
    </lineage>
</organism>
<dbReference type="EMBL" id="KJ412249">
    <property type="protein sequence ID" value="AHX39292.1"/>
    <property type="molecule type" value="Genomic_DNA"/>
</dbReference>
<dbReference type="PaxDb" id="4932-YFR052C-A"/>
<dbReference type="EnsemblFungi" id="YFR052C-A_mRNA">
    <property type="protein sequence ID" value="YFR052C-A"/>
    <property type="gene ID" value="YFR052C-A"/>
</dbReference>
<dbReference type="AGR" id="SGD:S000028768"/>
<dbReference type="SGD" id="S000028768">
    <property type="gene designation" value="YFR052C-A"/>
</dbReference>
<dbReference type="HOGENOM" id="CLU_2293898_0_0_1"/>
<dbReference type="GO" id="GO:0016020">
    <property type="term" value="C:membrane"/>
    <property type="evidence" value="ECO:0007669"/>
    <property type="project" value="UniProtKB-SubCell"/>
</dbReference>
<name>YF052_YEAST</name>
<sequence length="101" mass="11822">MDGLVTQAKIQLRLFQLRMVQVQVLLLLLHCPKKELPKVSLLVSLALNEKNVMKYKCVFPSLNIIILMSDALMFFLRSSICKYRHTHIYIFMCIILANKHF</sequence>